<reference key="1">
    <citation type="journal article" date="2015" name="Genome Announc.">
        <title>Genome sequence of Aspergillus flavus NRRL 3357, a strain that causes aflatoxin contamination of food and feed.</title>
        <authorList>
            <person name="Nierman W.C."/>
            <person name="Yu J."/>
            <person name="Fedorova-Abrams N.D."/>
            <person name="Losada L."/>
            <person name="Cleveland T.E."/>
            <person name="Bhatnagar D."/>
            <person name="Bennett J.W."/>
            <person name="Dean R."/>
            <person name="Payne G.A."/>
        </authorList>
    </citation>
    <scope>NUCLEOTIDE SEQUENCE [LARGE SCALE GENOMIC DNA]</scope>
    <source>
        <strain>ATCC 200026 / FGSC A1120 / IAM 13836 / NRRL 3357 / JCM 12722 / SRRC 167</strain>
    </source>
</reference>
<reference key="2">
    <citation type="journal article" date="2018" name="ACS Chem. Biol.">
        <title>NRPS-derived isoquinolines and lipopetides mediate antagonism between plant pathogenic fungi and bacteria.</title>
        <authorList>
            <person name="Khalid S."/>
            <person name="Baccile J.A."/>
            <person name="Spraker J.E."/>
            <person name="Tannous J."/>
            <person name="Imran M."/>
            <person name="Schroeder F.C."/>
            <person name="Keller N.P."/>
        </authorList>
    </citation>
    <scope>INDUCTION</scope>
    <scope>FUNCTION</scope>
    <scope>PATHWAY</scope>
</reference>
<name>IMQG_ASPFN</name>
<dbReference type="EC" id="2.1.1.-" evidence="5"/>
<dbReference type="EMBL" id="EQ963479">
    <property type="protein sequence ID" value="EED49608.1"/>
    <property type="molecule type" value="Genomic_DNA"/>
</dbReference>
<dbReference type="RefSeq" id="XP_002379989.1">
    <property type="nucleotide sequence ID" value="XM_002379948.1"/>
</dbReference>
<dbReference type="SMR" id="B8NI24"/>
<dbReference type="STRING" id="332952.B8NI24"/>
<dbReference type="EnsemblFungi" id="EED49608">
    <property type="protein sequence ID" value="EED49608"/>
    <property type="gene ID" value="AFLA_064290"/>
</dbReference>
<dbReference type="VEuPathDB" id="FungiDB:AFLA_008363"/>
<dbReference type="eggNOG" id="KOG1663">
    <property type="taxonomic scope" value="Eukaryota"/>
</dbReference>
<dbReference type="HOGENOM" id="CLU_067676_8_0_1"/>
<dbReference type="OMA" id="TIEDWAC"/>
<dbReference type="GO" id="GO:0046872">
    <property type="term" value="F:metal ion binding"/>
    <property type="evidence" value="ECO:0007669"/>
    <property type="project" value="UniProtKB-KW"/>
</dbReference>
<dbReference type="GO" id="GO:0008171">
    <property type="term" value="F:O-methyltransferase activity"/>
    <property type="evidence" value="ECO:0007669"/>
    <property type="project" value="InterPro"/>
</dbReference>
<dbReference type="GO" id="GO:0008757">
    <property type="term" value="F:S-adenosylmethionine-dependent methyltransferase activity"/>
    <property type="evidence" value="ECO:0007669"/>
    <property type="project" value="TreeGrafter"/>
</dbReference>
<dbReference type="GO" id="GO:0032259">
    <property type="term" value="P:methylation"/>
    <property type="evidence" value="ECO:0007669"/>
    <property type="project" value="UniProtKB-KW"/>
</dbReference>
<dbReference type="CDD" id="cd02440">
    <property type="entry name" value="AdoMet_MTases"/>
    <property type="match status" value="1"/>
</dbReference>
<dbReference type="Gene3D" id="3.40.50.150">
    <property type="entry name" value="Vaccinia Virus protein VP39"/>
    <property type="match status" value="1"/>
</dbReference>
<dbReference type="InterPro" id="IPR050362">
    <property type="entry name" value="Cation-dep_OMT"/>
</dbReference>
<dbReference type="InterPro" id="IPR029063">
    <property type="entry name" value="SAM-dependent_MTases_sf"/>
</dbReference>
<dbReference type="InterPro" id="IPR002935">
    <property type="entry name" value="SAM_O-MeTrfase"/>
</dbReference>
<dbReference type="PANTHER" id="PTHR10509:SF14">
    <property type="entry name" value="CAFFEOYL-COA O-METHYLTRANSFERASE 3-RELATED"/>
    <property type="match status" value="1"/>
</dbReference>
<dbReference type="PANTHER" id="PTHR10509">
    <property type="entry name" value="O-METHYLTRANSFERASE-RELATED"/>
    <property type="match status" value="1"/>
</dbReference>
<dbReference type="Pfam" id="PF01596">
    <property type="entry name" value="Methyltransf_3"/>
    <property type="match status" value="1"/>
</dbReference>
<dbReference type="SUPFAM" id="SSF53335">
    <property type="entry name" value="S-adenosyl-L-methionine-dependent methyltransferases"/>
    <property type="match status" value="1"/>
</dbReference>
<dbReference type="PROSITE" id="PS51682">
    <property type="entry name" value="SAM_OMT_I"/>
    <property type="match status" value="1"/>
</dbReference>
<protein>
    <recommendedName>
        <fullName evidence="4">O-methyltransferase imqG</fullName>
        <ecNumber evidence="5">2.1.1.-</ecNumber>
    </recommendedName>
    <alternativeName>
        <fullName evidence="4">Imizoquin biosynthesis cluster protein G</fullName>
    </alternativeName>
</protein>
<gene>
    <name evidence="4" type="primary">imqG</name>
    <name type="ORF">AFLA_064290</name>
</gene>
<feature type="chain" id="PRO_0000444553" description="O-methyltransferase imqG">
    <location>
        <begin position="1"/>
        <end position="247"/>
    </location>
</feature>
<feature type="binding site" evidence="1">
    <location>
        <position position="84"/>
    </location>
    <ligand>
        <name>S-adenosyl-L-methionine</name>
        <dbReference type="ChEBI" id="CHEBI:59789"/>
    </ligand>
</feature>
<feature type="binding site" evidence="1">
    <location>
        <begin position="86"/>
        <end position="87"/>
    </location>
    <ligand>
        <name>S-adenosyl-L-methionine</name>
        <dbReference type="ChEBI" id="CHEBI:59789"/>
    </ligand>
</feature>
<feature type="binding site" evidence="1">
    <location>
        <position position="138"/>
    </location>
    <ligand>
        <name>S-adenosyl-L-methionine</name>
        <dbReference type="ChEBI" id="CHEBI:59789"/>
    </ligand>
</feature>
<feature type="binding site" evidence="1">
    <location>
        <position position="163"/>
    </location>
    <ligand>
        <name>a divalent metal cation</name>
        <dbReference type="ChEBI" id="CHEBI:60240"/>
    </ligand>
</feature>
<feature type="binding site" evidence="1">
    <location>
        <position position="163"/>
    </location>
    <ligand>
        <name>substrate</name>
    </ligand>
</feature>
<feature type="binding site" evidence="1">
    <location>
        <position position="189"/>
    </location>
    <ligand>
        <name>a divalent metal cation</name>
        <dbReference type="ChEBI" id="CHEBI:60240"/>
    </ligand>
</feature>
<feature type="binding site" evidence="1">
    <location>
        <position position="190"/>
    </location>
    <ligand>
        <name>a divalent metal cation</name>
        <dbReference type="ChEBI" id="CHEBI:60240"/>
    </ligand>
</feature>
<keyword id="KW-0479">Metal-binding</keyword>
<keyword id="KW-0489">Methyltransferase</keyword>
<keyword id="KW-0949">S-adenosyl-L-methionine</keyword>
<keyword id="KW-0808">Transferase</keyword>
<organism>
    <name type="scientific">Aspergillus flavus (strain ATCC 200026 / FGSC A1120 / IAM 13836 / NRRL 3357 / JCM 12722 / SRRC 167)</name>
    <dbReference type="NCBI Taxonomy" id="332952"/>
    <lineage>
        <taxon>Eukaryota</taxon>
        <taxon>Fungi</taxon>
        <taxon>Dikarya</taxon>
        <taxon>Ascomycota</taxon>
        <taxon>Pezizomycotina</taxon>
        <taxon>Eurotiomycetes</taxon>
        <taxon>Eurotiomycetidae</taxon>
        <taxon>Eurotiales</taxon>
        <taxon>Aspergillaceae</taxon>
        <taxon>Aspergillus</taxon>
        <taxon>Aspergillus subgen. Circumdati</taxon>
    </lineage>
</organism>
<proteinExistence type="evidence at transcript level"/>
<sequence>MTATTTTTSQIFVSEDYNQDPNWYAVDNYTLSHLQPPTRPNHASLHQTLENSAKRGLEDISAFPTQAKFMALQCQLGGVKHALEVGTLGGYTAIYIASLNPDIRIVSIEIDPKSAEVAKENIAAAGYQDRIEVLVGAAIDLLPILQAKVENGEQERFGFTFIDANKDNGWDYFDYAVKMSRPRASIIVDNVVRAGKLVQEDYIKNDINVRGSRRTVENVGKDDRVDAVVLQTLSEKSYDGFLMAVVK</sequence>
<evidence type="ECO:0000250" key="1">
    <source>
        <dbReference type="UniProtKB" id="Q40313"/>
    </source>
</evidence>
<evidence type="ECO:0000255" key="2">
    <source>
        <dbReference type="PROSITE-ProRule" id="PRU01019"/>
    </source>
</evidence>
<evidence type="ECO:0000269" key="3">
    <source>
    </source>
</evidence>
<evidence type="ECO:0000303" key="4">
    <source>
    </source>
</evidence>
<evidence type="ECO:0000305" key="5">
    <source>
    </source>
</evidence>
<comment type="function">
    <text evidence="3">O-methyltransferase; part of the gene cluster that mediates the biosynthesis of imizoquins A to D, tripeptide-derived alkaloids that serve a protective role against oxidative stress that are essential for normal germination (PubMed:29182847). ImqB is a canonical three-module NRPS that assembles the tripeptide backbone of the imizoquins via condensation of Trp, Tyr, and Leu-derived precursors (PubMed:29182847). N-methylation by imqF and phenol oxidation by imqC, followed by cyclization via the FAD-dependent oxidase imqH carry out the three-step transformation of L-tyrosine into tetrahydroisoquinoline (PubMed:29182847). Importantly, this sequence requires the presence of a free amine in the tyrosine moiety, indicating that isoquinoline formation occurs prior to peptide bond formation (PubMed:29182847). The imidazolidin-4-one ring of imizoquins could form following additional oxidation of the methyl-derived bridgehead carbon by imqH (PubMed:29182847). Lastly, O-methylation by imqG and leucine hydroxylation by imqE complete biosynthesis of the imizoquins (PubMed:29182847).</text>
</comment>
<comment type="cofactor">
    <cofactor evidence="1">
        <name>a divalent metal cation</name>
        <dbReference type="ChEBI" id="CHEBI:60240"/>
    </cofactor>
    <text evidence="1">Binds 1 divalent metal cation per subunit.</text>
</comment>
<comment type="pathway">
    <text evidence="5">Secondary metabolite biosynthesis.</text>
</comment>
<comment type="subunit">
    <text evidence="1">Homodimer.</text>
</comment>
<comment type="induction">
    <text evidence="3">Expression is down-regulated by ralstonins, lipopeptides produced by the plant pathogenic bacteria Ralstonia solanacearum (PubMed:29182847). Expression is positively regulated by the imizoquins cluster-specific transcription regulator imqK (PubMed:29182847).</text>
</comment>
<comment type="similarity">
    <text evidence="2">Belongs to the class I-like SAM-binding methyltransferase superfamily. Cation-dependent O-methyltransferase family. CCoAMT subfamily.</text>
</comment>
<accession>B8NI24</accession>